<sequence>MAEERAPRGRDRDRNREEKVDDGMIEKLVAVNRVSKTVKGGRQFTFTALTVVGDGLGKVGFGYGKAREVPVAIQKSMEQARKNLATVDLNNGTLWHAVKSGHGAARVYMQPASEGTGVIAGGAMRAVLEAVGVKNVLAKAVGSRNPINLVRATLKGLSEVQSPARVAAKRGKKVEELNHG</sequence>
<organism>
    <name type="scientific">Xanthomonas euvesicatoria pv. vesicatoria (strain 85-10)</name>
    <name type="common">Xanthomonas campestris pv. vesicatoria</name>
    <dbReference type="NCBI Taxonomy" id="316273"/>
    <lineage>
        <taxon>Bacteria</taxon>
        <taxon>Pseudomonadati</taxon>
        <taxon>Pseudomonadota</taxon>
        <taxon>Gammaproteobacteria</taxon>
        <taxon>Lysobacterales</taxon>
        <taxon>Lysobacteraceae</taxon>
        <taxon>Xanthomonas</taxon>
    </lineage>
</organism>
<gene>
    <name evidence="1" type="primary">rpsE</name>
    <name type="ordered locus">XCV1016</name>
</gene>
<reference key="1">
    <citation type="journal article" date="2005" name="J. Bacteriol.">
        <title>Insights into genome plasticity and pathogenicity of the plant pathogenic Bacterium Xanthomonas campestris pv. vesicatoria revealed by the complete genome sequence.</title>
        <authorList>
            <person name="Thieme F."/>
            <person name="Koebnik R."/>
            <person name="Bekel T."/>
            <person name="Berger C."/>
            <person name="Boch J."/>
            <person name="Buettner D."/>
            <person name="Caldana C."/>
            <person name="Gaigalat L."/>
            <person name="Goesmann A."/>
            <person name="Kay S."/>
            <person name="Kirchner O."/>
            <person name="Lanz C."/>
            <person name="Linke B."/>
            <person name="McHardy A.C."/>
            <person name="Meyer F."/>
            <person name="Mittenhuber G."/>
            <person name="Nies D.H."/>
            <person name="Niesbach-Kloesgen U."/>
            <person name="Patschkowski T."/>
            <person name="Rueckert C."/>
            <person name="Rupp O."/>
            <person name="Schneiker S."/>
            <person name="Schuster S.C."/>
            <person name="Vorhoelter F.J."/>
            <person name="Weber E."/>
            <person name="Puehler A."/>
            <person name="Bonas U."/>
            <person name="Bartels D."/>
            <person name="Kaiser O."/>
        </authorList>
    </citation>
    <scope>NUCLEOTIDE SEQUENCE [LARGE SCALE GENOMIC DNA]</scope>
    <source>
        <strain>85-10</strain>
    </source>
</reference>
<dbReference type="EMBL" id="AM039952">
    <property type="protein sequence ID" value="CAJ22647.1"/>
    <property type="molecule type" value="Genomic_DNA"/>
</dbReference>
<dbReference type="RefSeq" id="WP_003486682.1">
    <property type="nucleotide sequence ID" value="NZ_CP017190.1"/>
</dbReference>
<dbReference type="SMR" id="Q3BWW6"/>
<dbReference type="STRING" id="456327.BJD11_17655"/>
<dbReference type="GeneID" id="97509353"/>
<dbReference type="KEGG" id="xcv:XCV1016"/>
<dbReference type="eggNOG" id="COG0098">
    <property type="taxonomic scope" value="Bacteria"/>
</dbReference>
<dbReference type="HOGENOM" id="CLU_065898_2_2_6"/>
<dbReference type="Proteomes" id="UP000007069">
    <property type="component" value="Chromosome"/>
</dbReference>
<dbReference type="GO" id="GO:0015935">
    <property type="term" value="C:small ribosomal subunit"/>
    <property type="evidence" value="ECO:0007669"/>
    <property type="project" value="InterPro"/>
</dbReference>
<dbReference type="GO" id="GO:0019843">
    <property type="term" value="F:rRNA binding"/>
    <property type="evidence" value="ECO:0007669"/>
    <property type="project" value="UniProtKB-UniRule"/>
</dbReference>
<dbReference type="GO" id="GO:0003735">
    <property type="term" value="F:structural constituent of ribosome"/>
    <property type="evidence" value="ECO:0007669"/>
    <property type="project" value="InterPro"/>
</dbReference>
<dbReference type="GO" id="GO:0006412">
    <property type="term" value="P:translation"/>
    <property type="evidence" value="ECO:0007669"/>
    <property type="project" value="UniProtKB-UniRule"/>
</dbReference>
<dbReference type="FunFam" id="3.30.160.20:FF:000001">
    <property type="entry name" value="30S ribosomal protein S5"/>
    <property type="match status" value="1"/>
</dbReference>
<dbReference type="FunFam" id="3.30.230.10:FF:000002">
    <property type="entry name" value="30S ribosomal protein S5"/>
    <property type="match status" value="1"/>
</dbReference>
<dbReference type="Gene3D" id="3.30.160.20">
    <property type="match status" value="1"/>
</dbReference>
<dbReference type="Gene3D" id="3.30.230.10">
    <property type="match status" value="1"/>
</dbReference>
<dbReference type="HAMAP" id="MF_01307_B">
    <property type="entry name" value="Ribosomal_uS5_B"/>
    <property type="match status" value="1"/>
</dbReference>
<dbReference type="InterPro" id="IPR020568">
    <property type="entry name" value="Ribosomal_Su5_D2-typ_SF"/>
</dbReference>
<dbReference type="InterPro" id="IPR000851">
    <property type="entry name" value="Ribosomal_uS5"/>
</dbReference>
<dbReference type="InterPro" id="IPR005712">
    <property type="entry name" value="Ribosomal_uS5_bac-type"/>
</dbReference>
<dbReference type="InterPro" id="IPR005324">
    <property type="entry name" value="Ribosomal_uS5_C"/>
</dbReference>
<dbReference type="InterPro" id="IPR013810">
    <property type="entry name" value="Ribosomal_uS5_N"/>
</dbReference>
<dbReference type="InterPro" id="IPR018192">
    <property type="entry name" value="Ribosomal_uS5_N_CS"/>
</dbReference>
<dbReference type="InterPro" id="IPR014721">
    <property type="entry name" value="Ribsml_uS5_D2-typ_fold_subgr"/>
</dbReference>
<dbReference type="NCBIfam" id="TIGR01021">
    <property type="entry name" value="rpsE_bact"/>
    <property type="match status" value="1"/>
</dbReference>
<dbReference type="PANTHER" id="PTHR48277">
    <property type="entry name" value="MITOCHONDRIAL RIBOSOMAL PROTEIN S5"/>
    <property type="match status" value="1"/>
</dbReference>
<dbReference type="PANTHER" id="PTHR48277:SF1">
    <property type="entry name" value="MITOCHONDRIAL RIBOSOMAL PROTEIN S5"/>
    <property type="match status" value="1"/>
</dbReference>
<dbReference type="Pfam" id="PF00333">
    <property type="entry name" value="Ribosomal_S5"/>
    <property type="match status" value="1"/>
</dbReference>
<dbReference type="Pfam" id="PF03719">
    <property type="entry name" value="Ribosomal_S5_C"/>
    <property type="match status" value="1"/>
</dbReference>
<dbReference type="SUPFAM" id="SSF54768">
    <property type="entry name" value="dsRNA-binding domain-like"/>
    <property type="match status" value="1"/>
</dbReference>
<dbReference type="SUPFAM" id="SSF54211">
    <property type="entry name" value="Ribosomal protein S5 domain 2-like"/>
    <property type="match status" value="1"/>
</dbReference>
<dbReference type="PROSITE" id="PS00585">
    <property type="entry name" value="RIBOSOMAL_S5"/>
    <property type="match status" value="1"/>
</dbReference>
<dbReference type="PROSITE" id="PS50881">
    <property type="entry name" value="S5_DSRBD"/>
    <property type="match status" value="1"/>
</dbReference>
<name>RS5_XANE5</name>
<feature type="chain" id="PRO_0000230382" description="Small ribosomal subunit protein uS5">
    <location>
        <begin position="1"/>
        <end position="180"/>
    </location>
</feature>
<feature type="domain" description="S5 DRBM" evidence="1">
    <location>
        <begin position="24"/>
        <end position="87"/>
    </location>
</feature>
<comment type="function">
    <text evidence="1">With S4 and S12 plays an important role in translational accuracy.</text>
</comment>
<comment type="function">
    <text evidence="1">Located at the back of the 30S subunit body where it stabilizes the conformation of the head with respect to the body.</text>
</comment>
<comment type="subunit">
    <text evidence="1">Part of the 30S ribosomal subunit. Contacts proteins S4 and S8.</text>
</comment>
<comment type="domain">
    <text>The N-terminal domain interacts with the head of the 30S subunit; the C-terminal domain interacts with the body and contacts protein S4. The interaction surface between S4 and S5 is involved in control of translational fidelity.</text>
</comment>
<comment type="similarity">
    <text evidence="1">Belongs to the universal ribosomal protein uS5 family.</text>
</comment>
<proteinExistence type="inferred from homology"/>
<keyword id="KW-0687">Ribonucleoprotein</keyword>
<keyword id="KW-0689">Ribosomal protein</keyword>
<keyword id="KW-0694">RNA-binding</keyword>
<keyword id="KW-0699">rRNA-binding</keyword>
<evidence type="ECO:0000255" key="1">
    <source>
        <dbReference type="HAMAP-Rule" id="MF_01307"/>
    </source>
</evidence>
<evidence type="ECO:0000305" key="2"/>
<accession>Q3BWW6</accession>
<protein>
    <recommendedName>
        <fullName evidence="1">Small ribosomal subunit protein uS5</fullName>
    </recommendedName>
    <alternativeName>
        <fullName evidence="2">30S ribosomal protein S5</fullName>
    </alternativeName>
</protein>